<gene>
    <name type="primary">vps38</name>
    <name type="ORF">SPBC18H10.19</name>
</gene>
<protein>
    <recommendedName>
        <fullName>Vacuolar protein sorting-associated protein 38</fullName>
    </recommendedName>
</protein>
<accession>O60149</accession>
<comment type="function">
    <text evidence="1">Involved in endosome-to-Golgi retrograde transport as part of the vps34 PI3-kinase complex II. Mediates the interaction between atg6 and the pik3-ppk19 core complex, leading to the recruitment of atg6 to the membrane (By similarity).</text>
</comment>
<comment type="subunit">
    <text evidence="1">Component of the vps34 PI3-kinase complex II composed of atg6, pik3, vps15 and vps38.</text>
</comment>
<comment type="subcellular location">
    <subcellularLocation>
        <location evidence="3">Cytoplasm</location>
    </subcellularLocation>
    <subcellularLocation>
        <location evidence="1">Golgi apparatus</location>
        <location evidence="1">trans-Golgi network membrane</location>
        <topology evidence="4">Peripheral membrane protein</topology>
    </subcellularLocation>
    <subcellularLocation>
        <location evidence="1">Endosome membrane</location>
        <topology evidence="4">Peripheral membrane protein</topology>
    </subcellularLocation>
</comment>
<comment type="similarity">
    <text evidence="4">Belongs to the VPS38 family.</text>
</comment>
<feature type="chain" id="PRO_0000372371" description="Vacuolar protein sorting-associated protein 38">
    <location>
        <begin position="1"/>
        <end position="474"/>
    </location>
</feature>
<feature type="coiled-coil region" evidence="2">
    <location>
        <begin position="271"/>
        <end position="300"/>
    </location>
</feature>
<reference key="1">
    <citation type="journal article" date="2002" name="Nature">
        <title>The genome sequence of Schizosaccharomyces pombe.</title>
        <authorList>
            <person name="Wood V."/>
            <person name="Gwilliam R."/>
            <person name="Rajandream M.A."/>
            <person name="Lyne M.H."/>
            <person name="Lyne R."/>
            <person name="Stewart A."/>
            <person name="Sgouros J.G."/>
            <person name="Peat N."/>
            <person name="Hayles J."/>
            <person name="Baker S.G."/>
            <person name="Basham D."/>
            <person name="Bowman S."/>
            <person name="Brooks K."/>
            <person name="Brown D."/>
            <person name="Brown S."/>
            <person name="Chillingworth T."/>
            <person name="Churcher C.M."/>
            <person name="Collins M."/>
            <person name="Connor R."/>
            <person name="Cronin A."/>
            <person name="Davis P."/>
            <person name="Feltwell T."/>
            <person name="Fraser A."/>
            <person name="Gentles S."/>
            <person name="Goble A."/>
            <person name="Hamlin N."/>
            <person name="Harris D.E."/>
            <person name="Hidalgo J."/>
            <person name="Hodgson G."/>
            <person name="Holroyd S."/>
            <person name="Hornsby T."/>
            <person name="Howarth S."/>
            <person name="Huckle E.J."/>
            <person name="Hunt S."/>
            <person name="Jagels K."/>
            <person name="James K.D."/>
            <person name="Jones L."/>
            <person name="Jones M."/>
            <person name="Leather S."/>
            <person name="McDonald S."/>
            <person name="McLean J."/>
            <person name="Mooney P."/>
            <person name="Moule S."/>
            <person name="Mungall K.L."/>
            <person name="Murphy L.D."/>
            <person name="Niblett D."/>
            <person name="Odell C."/>
            <person name="Oliver K."/>
            <person name="O'Neil S."/>
            <person name="Pearson D."/>
            <person name="Quail M.A."/>
            <person name="Rabbinowitsch E."/>
            <person name="Rutherford K.M."/>
            <person name="Rutter S."/>
            <person name="Saunders D."/>
            <person name="Seeger K."/>
            <person name="Sharp S."/>
            <person name="Skelton J."/>
            <person name="Simmonds M.N."/>
            <person name="Squares R."/>
            <person name="Squares S."/>
            <person name="Stevens K."/>
            <person name="Taylor K."/>
            <person name="Taylor R.G."/>
            <person name="Tivey A."/>
            <person name="Walsh S.V."/>
            <person name="Warren T."/>
            <person name="Whitehead S."/>
            <person name="Woodward J.R."/>
            <person name="Volckaert G."/>
            <person name="Aert R."/>
            <person name="Robben J."/>
            <person name="Grymonprez B."/>
            <person name="Weltjens I."/>
            <person name="Vanstreels E."/>
            <person name="Rieger M."/>
            <person name="Schaefer M."/>
            <person name="Mueller-Auer S."/>
            <person name="Gabel C."/>
            <person name="Fuchs M."/>
            <person name="Duesterhoeft A."/>
            <person name="Fritzc C."/>
            <person name="Holzer E."/>
            <person name="Moestl D."/>
            <person name="Hilbert H."/>
            <person name="Borzym K."/>
            <person name="Langer I."/>
            <person name="Beck A."/>
            <person name="Lehrach H."/>
            <person name="Reinhardt R."/>
            <person name="Pohl T.M."/>
            <person name="Eger P."/>
            <person name="Zimmermann W."/>
            <person name="Wedler H."/>
            <person name="Wambutt R."/>
            <person name="Purnelle B."/>
            <person name="Goffeau A."/>
            <person name="Cadieu E."/>
            <person name="Dreano S."/>
            <person name="Gloux S."/>
            <person name="Lelaure V."/>
            <person name="Mottier S."/>
            <person name="Galibert F."/>
            <person name="Aves S.J."/>
            <person name="Xiang Z."/>
            <person name="Hunt C."/>
            <person name="Moore K."/>
            <person name="Hurst S.M."/>
            <person name="Lucas M."/>
            <person name="Rochet M."/>
            <person name="Gaillardin C."/>
            <person name="Tallada V.A."/>
            <person name="Garzon A."/>
            <person name="Thode G."/>
            <person name="Daga R.R."/>
            <person name="Cruzado L."/>
            <person name="Jimenez J."/>
            <person name="Sanchez M."/>
            <person name="del Rey F."/>
            <person name="Benito J."/>
            <person name="Dominguez A."/>
            <person name="Revuelta J.L."/>
            <person name="Moreno S."/>
            <person name="Armstrong J."/>
            <person name="Forsburg S.L."/>
            <person name="Cerutti L."/>
            <person name="Lowe T."/>
            <person name="McCombie W.R."/>
            <person name="Paulsen I."/>
            <person name="Potashkin J."/>
            <person name="Shpakovski G.V."/>
            <person name="Ussery D."/>
            <person name="Barrell B.G."/>
            <person name="Nurse P."/>
        </authorList>
    </citation>
    <scope>NUCLEOTIDE SEQUENCE [LARGE SCALE GENOMIC DNA]</scope>
    <source>
        <strain>972 / ATCC 24843</strain>
    </source>
</reference>
<reference key="2">
    <citation type="journal article" date="2011" name="Science">
        <title>Comparative functional genomics of the fission yeasts.</title>
        <authorList>
            <person name="Rhind N."/>
            <person name="Chen Z."/>
            <person name="Yassour M."/>
            <person name="Thompson D.A."/>
            <person name="Haas B.J."/>
            <person name="Habib N."/>
            <person name="Wapinski I."/>
            <person name="Roy S."/>
            <person name="Lin M.F."/>
            <person name="Heiman D.I."/>
            <person name="Young S.K."/>
            <person name="Furuya K."/>
            <person name="Guo Y."/>
            <person name="Pidoux A."/>
            <person name="Chen H.M."/>
            <person name="Robbertse B."/>
            <person name="Goldberg J.M."/>
            <person name="Aoki K."/>
            <person name="Bayne E.H."/>
            <person name="Berlin A.M."/>
            <person name="Desjardins C.A."/>
            <person name="Dobbs E."/>
            <person name="Dukaj L."/>
            <person name="Fan L."/>
            <person name="FitzGerald M.G."/>
            <person name="French C."/>
            <person name="Gujja S."/>
            <person name="Hansen K."/>
            <person name="Keifenheim D."/>
            <person name="Levin J.Z."/>
            <person name="Mosher R.A."/>
            <person name="Mueller C.A."/>
            <person name="Pfiffner J."/>
            <person name="Priest M."/>
            <person name="Russ C."/>
            <person name="Smialowska A."/>
            <person name="Swoboda P."/>
            <person name="Sykes S.M."/>
            <person name="Vaughn M."/>
            <person name="Vengrova S."/>
            <person name="Yoder R."/>
            <person name="Zeng Q."/>
            <person name="Allshire R."/>
            <person name="Baulcombe D."/>
            <person name="Birren B.W."/>
            <person name="Brown W."/>
            <person name="Ekwall K."/>
            <person name="Kellis M."/>
            <person name="Leatherwood J."/>
            <person name="Levin H."/>
            <person name="Margalit H."/>
            <person name="Martienssen R."/>
            <person name="Nieduszynski C.A."/>
            <person name="Spatafora J.W."/>
            <person name="Friedman N."/>
            <person name="Dalgaard J.Z."/>
            <person name="Baumann P."/>
            <person name="Niki H."/>
            <person name="Regev A."/>
            <person name="Nusbaum C."/>
        </authorList>
    </citation>
    <scope>REVISION OF GENE MODEL</scope>
</reference>
<reference key="3">
    <citation type="journal article" date="2006" name="Nat. Biotechnol.">
        <title>ORFeome cloning and global analysis of protein localization in the fission yeast Schizosaccharomyces pombe.</title>
        <authorList>
            <person name="Matsuyama A."/>
            <person name="Arai R."/>
            <person name="Yashiroda Y."/>
            <person name="Shirai A."/>
            <person name="Kamata A."/>
            <person name="Sekido S."/>
            <person name="Kobayashi Y."/>
            <person name="Hashimoto A."/>
            <person name="Hamamoto M."/>
            <person name="Hiraoka Y."/>
            <person name="Horinouchi S."/>
            <person name="Yoshida M."/>
        </authorList>
    </citation>
    <scope>SUBCELLULAR LOCATION [LARGE SCALE ANALYSIS]</scope>
</reference>
<reference key="4">
    <citation type="journal article" date="2013" name="PLoS Genet.">
        <title>Global analysis of fission yeast mating genes reveals new autophagy factors.</title>
        <authorList>
            <person name="Sun L.L."/>
            <person name="Li M."/>
            <person name="Suo F."/>
            <person name="Liu X.M."/>
            <person name="Shen E.Z."/>
            <person name="Yang B."/>
            <person name="Dong M.Q."/>
            <person name="He W.Z."/>
            <person name="Du L.L."/>
        </authorList>
    </citation>
    <scope>IDENTIFICATION</scope>
</reference>
<organism>
    <name type="scientific">Schizosaccharomyces pombe (strain 972 / ATCC 24843)</name>
    <name type="common">Fission yeast</name>
    <dbReference type="NCBI Taxonomy" id="284812"/>
    <lineage>
        <taxon>Eukaryota</taxon>
        <taxon>Fungi</taxon>
        <taxon>Dikarya</taxon>
        <taxon>Ascomycota</taxon>
        <taxon>Taphrinomycotina</taxon>
        <taxon>Schizosaccharomycetes</taxon>
        <taxon>Schizosaccharomycetales</taxon>
        <taxon>Schizosaccharomycetaceae</taxon>
        <taxon>Schizosaccharomyces</taxon>
    </lineage>
</organism>
<name>VPS38_SCHPO</name>
<sequence>MSLELPGNYRLSRLKSIQIRNVQEIQNHSKFAINTTENLWKRDVQLKRAISEGTIRIFISLHVQSKKLPVYITETSGNANHIFYVDEKVTEKLQKYRHEEYFIVRTWCSSSSHAFKLHKEWKILRYDSNFRYIGNDPVFAVCHIRNGLLCEFNDGVYIYTTSQSSDIMRQTSFPKSASTYSIDRRKDGYTIQKITRILKLAECIDEMHIAKHEIRAHFQEEEFQQIRLMHKRMLLRDEKIDELAKLEHLWQKQINSITQMRTKFDKTKSWLSSKRNTLNKSKESLQKDEAEYVELANSLKTKVETNIEIRILMAHAIRMHVSHLSKIYPIQPSPGNHDEFTIRNLRLSFEPDKINNVEMAASIGFLAHLLQTLSKYLEKELAYPILCASSRSSILDTLTPDIPTRIFPLYPATRPIELFEHAIYLLNQDVNDFLETFGLPIDQSMDILRNFKKLLQFILSGQHLSFVQVTSTAP</sequence>
<evidence type="ECO:0000250" key="1">
    <source>
        <dbReference type="UniProtKB" id="Q05919"/>
    </source>
</evidence>
<evidence type="ECO:0000255" key="2"/>
<evidence type="ECO:0000269" key="3">
    <source>
    </source>
</evidence>
<evidence type="ECO:0000305" key="4"/>
<keyword id="KW-0175">Coiled coil</keyword>
<keyword id="KW-0963">Cytoplasm</keyword>
<keyword id="KW-0967">Endosome</keyword>
<keyword id="KW-0333">Golgi apparatus</keyword>
<keyword id="KW-0472">Membrane</keyword>
<keyword id="KW-0653">Protein transport</keyword>
<keyword id="KW-1185">Reference proteome</keyword>
<keyword id="KW-0813">Transport</keyword>
<dbReference type="EMBL" id="CU329671">
    <property type="protein sequence ID" value="CAA18416.2"/>
    <property type="molecule type" value="Genomic_DNA"/>
</dbReference>
<dbReference type="PIR" id="T39783">
    <property type="entry name" value="T39783"/>
</dbReference>
<dbReference type="RefSeq" id="NP_595743.2">
    <property type="nucleotide sequence ID" value="NM_001021641.2"/>
</dbReference>
<dbReference type="SMR" id="O60149"/>
<dbReference type="BioGRID" id="277354">
    <property type="interactions" value="78"/>
</dbReference>
<dbReference type="ComplexPortal" id="CPX-25772">
    <property type="entry name" value="Phosphatidylinositol 3-kinase complex, class III, type II"/>
</dbReference>
<dbReference type="FunCoup" id="O60149">
    <property type="interactions" value="20"/>
</dbReference>
<dbReference type="STRING" id="284812.O60149"/>
<dbReference type="PaxDb" id="4896-SPBC18H10.19.1"/>
<dbReference type="EnsemblFungi" id="SPBC18H10.19.1">
    <property type="protein sequence ID" value="SPBC18H10.19.1:pep"/>
    <property type="gene ID" value="SPBC18H10.19"/>
</dbReference>
<dbReference type="GeneID" id="2540836"/>
<dbReference type="KEGG" id="spo:2540836"/>
<dbReference type="PomBase" id="SPBC18H10.19">
    <property type="gene designation" value="vps38"/>
</dbReference>
<dbReference type="VEuPathDB" id="FungiDB:SPBC18H10.19"/>
<dbReference type="eggNOG" id="KOG2896">
    <property type="taxonomic scope" value="Eukaryota"/>
</dbReference>
<dbReference type="HOGENOM" id="CLU_588145_0_0_1"/>
<dbReference type="InParanoid" id="O60149"/>
<dbReference type="OMA" id="HYRFEYG"/>
<dbReference type="Reactome" id="R-SPO-1632852">
    <property type="pathway name" value="Macroautophagy"/>
</dbReference>
<dbReference type="PRO" id="PR:O60149"/>
<dbReference type="Proteomes" id="UP000002485">
    <property type="component" value="Chromosome II"/>
</dbReference>
<dbReference type="GO" id="GO:0005829">
    <property type="term" value="C:cytosol"/>
    <property type="evidence" value="ECO:0007005"/>
    <property type="project" value="PomBase"/>
</dbReference>
<dbReference type="GO" id="GO:0005768">
    <property type="term" value="C:endosome"/>
    <property type="evidence" value="ECO:0000318"/>
    <property type="project" value="GO_Central"/>
</dbReference>
<dbReference type="GO" id="GO:0010008">
    <property type="term" value="C:endosome membrane"/>
    <property type="evidence" value="ECO:0007669"/>
    <property type="project" value="UniProtKB-SubCell"/>
</dbReference>
<dbReference type="GO" id="GO:0000329">
    <property type="term" value="C:fungal-type vacuole membrane"/>
    <property type="evidence" value="ECO:0000266"/>
    <property type="project" value="PomBase"/>
</dbReference>
<dbReference type="GO" id="GO:0005794">
    <property type="term" value="C:Golgi apparatus"/>
    <property type="evidence" value="ECO:0007669"/>
    <property type="project" value="UniProtKB-SubCell"/>
</dbReference>
<dbReference type="GO" id="GO:0000323">
    <property type="term" value="C:lytic vacuole"/>
    <property type="evidence" value="ECO:0000318"/>
    <property type="project" value="GO_Central"/>
</dbReference>
<dbReference type="GO" id="GO:0034272">
    <property type="term" value="C:phosphatidylinositol 3-kinase complex, class III, type II"/>
    <property type="evidence" value="ECO:0000314"/>
    <property type="project" value="PomBase"/>
</dbReference>
<dbReference type="GO" id="GO:0000149">
    <property type="term" value="F:SNARE binding"/>
    <property type="evidence" value="ECO:0000318"/>
    <property type="project" value="GO_Central"/>
</dbReference>
<dbReference type="GO" id="GO:0045324">
    <property type="term" value="P:late endosome to vacuole transport"/>
    <property type="evidence" value="ECO:0000266"/>
    <property type="project" value="PomBase"/>
</dbReference>
<dbReference type="GO" id="GO:0015031">
    <property type="term" value="P:protein transport"/>
    <property type="evidence" value="ECO:0007669"/>
    <property type="project" value="UniProtKB-KW"/>
</dbReference>
<dbReference type="GO" id="GO:0035493">
    <property type="term" value="P:SNARE complex assembly"/>
    <property type="evidence" value="ECO:0000318"/>
    <property type="project" value="GO_Central"/>
</dbReference>
<dbReference type="PANTHER" id="PTHR15157">
    <property type="entry name" value="UV RADIATION RESISTANCE-ASSOCIATED GENE PROTEIN"/>
    <property type="match status" value="1"/>
</dbReference>
<dbReference type="PANTHER" id="PTHR15157:SF5">
    <property type="entry name" value="UV RADIATION RESISTANCE-ASSOCIATED GENE PROTEIN"/>
    <property type="match status" value="1"/>
</dbReference>
<proteinExistence type="inferred from homology"/>